<comment type="function">
    <text evidence="1">DNA-dependent RNA polymerase catalyzes the transcription of DNA into RNA using the four ribonucleoside triphosphates as substrates.</text>
</comment>
<comment type="catalytic activity">
    <reaction evidence="1">
        <text>RNA(n) + a ribonucleoside 5'-triphosphate = RNA(n+1) + diphosphate</text>
        <dbReference type="Rhea" id="RHEA:21248"/>
        <dbReference type="Rhea" id="RHEA-COMP:14527"/>
        <dbReference type="Rhea" id="RHEA-COMP:17342"/>
        <dbReference type="ChEBI" id="CHEBI:33019"/>
        <dbReference type="ChEBI" id="CHEBI:61557"/>
        <dbReference type="ChEBI" id="CHEBI:140395"/>
        <dbReference type="EC" id="2.7.7.6"/>
    </reaction>
</comment>
<comment type="subunit">
    <text evidence="1">The RNAP catalytic core consists of 2 alpha, 1 beta, 1 beta' and 1 omega subunit. When a sigma factor is associated with the core the holoenzyme is formed, which can initiate transcription.</text>
</comment>
<comment type="similarity">
    <text evidence="1">Belongs to the RNA polymerase beta chain family.</text>
</comment>
<name>RPOB_PHOV8</name>
<accession>A6KYK3</accession>
<sequence>MSSNTENQRVNFASIKNPMKYPDFLEVQLKSFQDFLQLDTPPEKRKNDGLYKVFAENFPIADTRNNFVLEFLDYYIDPPHYSIDECLERGLTYSVPLKAKLKLYCTDPDHEDFDTVIQDVYLGPIPYMTPKGTFVINGAERVVVSQLHRSPGVFFGQSVHANGTKLYSARIIPFKGSWIEFATDINNVMYAYIDRKKKLPVTTLLRAVGFENDKDILEIFNLAEDVKVNKTNLKKVVGRKLAARVLKTWTEDFVDEDTGEVVSIERNEVIIDRETVIEEDHIDEIIDSGVQNILVHKEEANSSDYSIIFNTLQKDPSNSEKEAVLYIYRQLRNADPADDASAREVINNLFFSEKRYDLGEVGRYRINKKLGLTTDMDVKVLTKQDIIEIIKYLIELINSKADVDDIDHLSNRRVRTVGEQLSNQFAIGLARMSRTIRERMNVRDNEVFTPIDLINAKTISSVINSFFGTNALSQFMDQTNPLAEITHKRRLSALGPGGLSRERAGFEVRDVHYTHYGRLCPIETPEGPNIGLISSLCVYAKINELGFISTPYRKVADGKVDISDEGIEYLTAEEEEDKIIAQGNAPLDDEGKFVREKVKARRDADYPVVTPDQVELMDVSPQQIASIAASLIPFLEHDDANRALMGSNMMRQAVPLLRTEAPIVGTGIEKQLVEDSRTQIAAEGDGVVEYVDATTIRILYDRNEDEEFVSFEPALKEYRIPKFRKTNQSMTIDLRPTCDKGQRVKKGDILTEGYSTQGGELALGKNLLVAYMPWKGYNYEDAIVLNERVVREDLLTSVHVDEYILEVRETKRGMEELTSDIPNVSEEATKDLDENGIVRVGARIEPGDILIGKITPKGESDPSPEEKLLRAIFGDKAGDVKDASLKASPSLRGVVIDKKLFSRVIKSRSEKNADKAILPKLNDEFEEKAAKLKDILIEKLLVLTNGKVSQGVKDYLGTEVIAKGAKFTKRDLESLDYTIIQLSKWTADAHKNDMIRDLVMNYLKKYKELDAELKRKKFAITIGDELPAGIIQMAKVYIAKKRKIGVGDKMAGRHGNKGIVSRVVRQEDMPFLADGTPVDIVLNPLGVPSRMNIGQIFEAVLGRAGKELGVKFATPIFDGASMDDLNEWTDKAGLPRYCKTYLCDGGTGERFDQPATVGVTYMLKLGHMVEDKMHARSIGPYSLITQQPLGGKAQFGGQRFGEMEVWALEAFGAAHILQEILTIKSDDVVGRSKAYEAIVKGEPMPTPGIPESLNVLLHELRGLGLSINLE</sequence>
<gene>
    <name evidence="1" type="primary">rpoB</name>
    <name type="ordered locus">BVU_0813</name>
</gene>
<protein>
    <recommendedName>
        <fullName evidence="1">DNA-directed RNA polymerase subunit beta</fullName>
        <shortName evidence="1">RNAP subunit beta</shortName>
        <ecNumber evidence="1">2.7.7.6</ecNumber>
    </recommendedName>
    <alternativeName>
        <fullName evidence="1">RNA polymerase subunit beta</fullName>
    </alternativeName>
    <alternativeName>
        <fullName evidence="1">Transcriptase subunit beta</fullName>
    </alternativeName>
</protein>
<keyword id="KW-0240">DNA-directed RNA polymerase</keyword>
<keyword id="KW-0548">Nucleotidyltransferase</keyword>
<keyword id="KW-0804">Transcription</keyword>
<keyword id="KW-0808">Transferase</keyword>
<dbReference type="EC" id="2.7.7.6" evidence="1"/>
<dbReference type="EMBL" id="CP000139">
    <property type="protein sequence ID" value="ABR38517.1"/>
    <property type="molecule type" value="Genomic_DNA"/>
</dbReference>
<dbReference type="RefSeq" id="WP_005844834.1">
    <property type="nucleotide sequence ID" value="NZ_JANSWM010000035.1"/>
</dbReference>
<dbReference type="SMR" id="A6KYK3"/>
<dbReference type="STRING" id="435590.BVU_0813"/>
<dbReference type="PaxDb" id="435590-BVU_0813"/>
<dbReference type="GeneID" id="5301780"/>
<dbReference type="KEGG" id="bvu:BVU_0813"/>
<dbReference type="eggNOG" id="COG0085">
    <property type="taxonomic scope" value="Bacteria"/>
</dbReference>
<dbReference type="HOGENOM" id="CLU_000524_4_1_10"/>
<dbReference type="BioCyc" id="BVUL435590:G1G59-855-MONOMER"/>
<dbReference type="Proteomes" id="UP000002861">
    <property type="component" value="Chromosome"/>
</dbReference>
<dbReference type="GO" id="GO:0000428">
    <property type="term" value="C:DNA-directed RNA polymerase complex"/>
    <property type="evidence" value="ECO:0007669"/>
    <property type="project" value="UniProtKB-KW"/>
</dbReference>
<dbReference type="GO" id="GO:0003677">
    <property type="term" value="F:DNA binding"/>
    <property type="evidence" value="ECO:0007669"/>
    <property type="project" value="UniProtKB-UniRule"/>
</dbReference>
<dbReference type="GO" id="GO:0003899">
    <property type="term" value="F:DNA-directed RNA polymerase activity"/>
    <property type="evidence" value="ECO:0007669"/>
    <property type="project" value="UniProtKB-UniRule"/>
</dbReference>
<dbReference type="GO" id="GO:0032549">
    <property type="term" value="F:ribonucleoside binding"/>
    <property type="evidence" value="ECO:0007669"/>
    <property type="project" value="InterPro"/>
</dbReference>
<dbReference type="GO" id="GO:0006351">
    <property type="term" value="P:DNA-templated transcription"/>
    <property type="evidence" value="ECO:0007669"/>
    <property type="project" value="UniProtKB-UniRule"/>
</dbReference>
<dbReference type="CDD" id="cd00653">
    <property type="entry name" value="RNA_pol_B_RPB2"/>
    <property type="match status" value="1"/>
</dbReference>
<dbReference type="Gene3D" id="2.40.50.100">
    <property type="match status" value="1"/>
</dbReference>
<dbReference type="Gene3D" id="2.40.50.150">
    <property type="match status" value="1"/>
</dbReference>
<dbReference type="Gene3D" id="3.90.1100.10">
    <property type="match status" value="1"/>
</dbReference>
<dbReference type="Gene3D" id="2.30.150.10">
    <property type="entry name" value="DNA-directed RNA polymerase, beta subunit, external 1 domain"/>
    <property type="match status" value="1"/>
</dbReference>
<dbReference type="Gene3D" id="2.40.270.10">
    <property type="entry name" value="DNA-directed RNA polymerase, subunit 2, domain 6"/>
    <property type="match status" value="2"/>
</dbReference>
<dbReference type="Gene3D" id="3.90.1800.10">
    <property type="entry name" value="RNA polymerase alpha subunit dimerisation domain"/>
    <property type="match status" value="1"/>
</dbReference>
<dbReference type="Gene3D" id="3.90.1110.10">
    <property type="entry name" value="RNA polymerase Rpb2, domain 2"/>
    <property type="match status" value="1"/>
</dbReference>
<dbReference type="HAMAP" id="MF_01321">
    <property type="entry name" value="RNApol_bact_RpoB"/>
    <property type="match status" value="1"/>
</dbReference>
<dbReference type="InterPro" id="IPR042107">
    <property type="entry name" value="DNA-dir_RNA_pol_bsu_ext_1_sf"/>
</dbReference>
<dbReference type="InterPro" id="IPR019462">
    <property type="entry name" value="DNA-dir_RNA_pol_bsu_external_1"/>
</dbReference>
<dbReference type="InterPro" id="IPR015712">
    <property type="entry name" value="DNA-dir_RNA_pol_su2"/>
</dbReference>
<dbReference type="InterPro" id="IPR007120">
    <property type="entry name" value="DNA-dir_RNAP_su2_dom"/>
</dbReference>
<dbReference type="InterPro" id="IPR037033">
    <property type="entry name" value="DNA-dir_RNAP_su2_hyb_sf"/>
</dbReference>
<dbReference type="InterPro" id="IPR010243">
    <property type="entry name" value="RNA_pol_bsu_bac"/>
</dbReference>
<dbReference type="InterPro" id="IPR007121">
    <property type="entry name" value="RNA_pol_bsu_CS"/>
</dbReference>
<dbReference type="InterPro" id="IPR007644">
    <property type="entry name" value="RNA_pol_bsu_protrusion"/>
</dbReference>
<dbReference type="InterPro" id="IPR007642">
    <property type="entry name" value="RNA_pol_Rpb2_2"/>
</dbReference>
<dbReference type="InterPro" id="IPR037034">
    <property type="entry name" value="RNA_pol_Rpb2_2_sf"/>
</dbReference>
<dbReference type="InterPro" id="IPR007645">
    <property type="entry name" value="RNA_pol_Rpb2_3"/>
</dbReference>
<dbReference type="InterPro" id="IPR007641">
    <property type="entry name" value="RNA_pol_Rpb2_7"/>
</dbReference>
<dbReference type="InterPro" id="IPR014724">
    <property type="entry name" value="RNA_pol_RPB2_OB-fold"/>
</dbReference>
<dbReference type="NCBIfam" id="NF001616">
    <property type="entry name" value="PRK00405.1"/>
    <property type="match status" value="1"/>
</dbReference>
<dbReference type="NCBIfam" id="TIGR02013">
    <property type="entry name" value="rpoB"/>
    <property type="match status" value="1"/>
</dbReference>
<dbReference type="PANTHER" id="PTHR20856">
    <property type="entry name" value="DNA-DIRECTED RNA POLYMERASE I SUBUNIT 2"/>
    <property type="match status" value="1"/>
</dbReference>
<dbReference type="Pfam" id="PF04563">
    <property type="entry name" value="RNA_pol_Rpb2_1"/>
    <property type="match status" value="1"/>
</dbReference>
<dbReference type="Pfam" id="PF04561">
    <property type="entry name" value="RNA_pol_Rpb2_2"/>
    <property type="match status" value="2"/>
</dbReference>
<dbReference type="Pfam" id="PF04565">
    <property type="entry name" value="RNA_pol_Rpb2_3"/>
    <property type="match status" value="1"/>
</dbReference>
<dbReference type="Pfam" id="PF10385">
    <property type="entry name" value="RNA_pol_Rpb2_45"/>
    <property type="match status" value="1"/>
</dbReference>
<dbReference type="Pfam" id="PF00562">
    <property type="entry name" value="RNA_pol_Rpb2_6"/>
    <property type="match status" value="1"/>
</dbReference>
<dbReference type="Pfam" id="PF04560">
    <property type="entry name" value="RNA_pol_Rpb2_7"/>
    <property type="match status" value="1"/>
</dbReference>
<dbReference type="SUPFAM" id="SSF64484">
    <property type="entry name" value="beta and beta-prime subunits of DNA dependent RNA-polymerase"/>
    <property type="match status" value="1"/>
</dbReference>
<dbReference type="PROSITE" id="PS01166">
    <property type="entry name" value="RNA_POL_BETA"/>
    <property type="match status" value="1"/>
</dbReference>
<organism>
    <name type="scientific">Phocaeicola vulgatus (strain ATCC 8482 / DSM 1447 / JCM 5826 / CCUG 4940 / NBRC 14291 / NCTC 11154)</name>
    <name type="common">Bacteroides vulgatus</name>
    <dbReference type="NCBI Taxonomy" id="435590"/>
    <lineage>
        <taxon>Bacteria</taxon>
        <taxon>Pseudomonadati</taxon>
        <taxon>Bacteroidota</taxon>
        <taxon>Bacteroidia</taxon>
        <taxon>Bacteroidales</taxon>
        <taxon>Bacteroidaceae</taxon>
        <taxon>Phocaeicola</taxon>
    </lineage>
</organism>
<proteinExistence type="inferred from homology"/>
<feature type="chain" id="PRO_0000300281" description="DNA-directed RNA polymerase subunit beta">
    <location>
        <begin position="1"/>
        <end position="1270"/>
    </location>
</feature>
<evidence type="ECO:0000255" key="1">
    <source>
        <dbReference type="HAMAP-Rule" id="MF_01321"/>
    </source>
</evidence>
<reference key="1">
    <citation type="journal article" date="2007" name="PLoS Biol.">
        <title>Evolution of symbiotic bacteria in the distal human intestine.</title>
        <authorList>
            <person name="Xu J."/>
            <person name="Mahowald M.A."/>
            <person name="Ley R.E."/>
            <person name="Lozupone C.A."/>
            <person name="Hamady M."/>
            <person name="Martens E.C."/>
            <person name="Henrissat B."/>
            <person name="Coutinho P.M."/>
            <person name="Minx P."/>
            <person name="Latreille P."/>
            <person name="Cordum H."/>
            <person name="Van Brunt A."/>
            <person name="Kim K."/>
            <person name="Fulton R.S."/>
            <person name="Fulton L.A."/>
            <person name="Clifton S.W."/>
            <person name="Wilson R.K."/>
            <person name="Knight R.D."/>
            <person name="Gordon J.I."/>
        </authorList>
    </citation>
    <scope>NUCLEOTIDE SEQUENCE [LARGE SCALE GENOMIC DNA]</scope>
    <source>
        <strain>ATCC 8482 / DSM 1447 / JCM 5826 / CCUG 4940 / NBRC 14291 / NCTC 11154</strain>
    </source>
</reference>